<gene>
    <name type="primary">CYP71A28</name>
    <name type="ordered locus">At4g20235</name>
    <name type="ORF">F1C12.160</name>
</gene>
<reference key="1">
    <citation type="journal article" date="1999" name="Nature">
        <title>Sequence and analysis of chromosome 4 of the plant Arabidopsis thaliana.</title>
        <authorList>
            <person name="Mayer K.F.X."/>
            <person name="Schueller C."/>
            <person name="Wambutt R."/>
            <person name="Murphy G."/>
            <person name="Volckaert G."/>
            <person name="Pohl T."/>
            <person name="Duesterhoeft A."/>
            <person name="Stiekema W."/>
            <person name="Entian K.-D."/>
            <person name="Terryn N."/>
            <person name="Harris B."/>
            <person name="Ansorge W."/>
            <person name="Brandt P."/>
            <person name="Grivell L.A."/>
            <person name="Rieger M."/>
            <person name="Weichselgartner M."/>
            <person name="de Simone V."/>
            <person name="Obermaier B."/>
            <person name="Mache R."/>
            <person name="Mueller M."/>
            <person name="Kreis M."/>
            <person name="Delseny M."/>
            <person name="Puigdomenech P."/>
            <person name="Watson M."/>
            <person name="Schmidtheini T."/>
            <person name="Reichert B."/>
            <person name="Portetelle D."/>
            <person name="Perez-Alonso M."/>
            <person name="Boutry M."/>
            <person name="Bancroft I."/>
            <person name="Vos P."/>
            <person name="Hoheisel J."/>
            <person name="Zimmermann W."/>
            <person name="Wedler H."/>
            <person name="Ridley P."/>
            <person name="Langham S.-A."/>
            <person name="McCullagh B."/>
            <person name="Bilham L."/>
            <person name="Robben J."/>
            <person name="van der Schueren J."/>
            <person name="Grymonprez B."/>
            <person name="Chuang Y.-J."/>
            <person name="Vandenbussche F."/>
            <person name="Braeken M."/>
            <person name="Weltjens I."/>
            <person name="Voet M."/>
            <person name="Bastiaens I."/>
            <person name="Aert R."/>
            <person name="Defoor E."/>
            <person name="Weitzenegger T."/>
            <person name="Bothe G."/>
            <person name="Ramsperger U."/>
            <person name="Hilbert H."/>
            <person name="Braun M."/>
            <person name="Holzer E."/>
            <person name="Brandt A."/>
            <person name="Peters S."/>
            <person name="van Staveren M."/>
            <person name="Dirkse W."/>
            <person name="Mooijman P."/>
            <person name="Klein Lankhorst R."/>
            <person name="Rose M."/>
            <person name="Hauf J."/>
            <person name="Koetter P."/>
            <person name="Berneiser S."/>
            <person name="Hempel S."/>
            <person name="Feldpausch M."/>
            <person name="Lamberth S."/>
            <person name="Van den Daele H."/>
            <person name="De Keyser A."/>
            <person name="Buysshaert C."/>
            <person name="Gielen J."/>
            <person name="Villarroel R."/>
            <person name="De Clercq R."/>
            <person name="van Montagu M."/>
            <person name="Rogers J."/>
            <person name="Cronin A."/>
            <person name="Quail M.A."/>
            <person name="Bray-Allen S."/>
            <person name="Clark L."/>
            <person name="Doggett J."/>
            <person name="Hall S."/>
            <person name="Kay M."/>
            <person name="Lennard N."/>
            <person name="McLay K."/>
            <person name="Mayes R."/>
            <person name="Pettett A."/>
            <person name="Rajandream M.A."/>
            <person name="Lyne M."/>
            <person name="Benes V."/>
            <person name="Rechmann S."/>
            <person name="Borkova D."/>
            <person name="Bloecker H."/>
            <person name="Scharfe M."/>
            <person name="Grimm M."/>
            <person name="Loehnert T.-H."/>
            <person name="Dose S."/>
            <person name="de Haan M."/>
            <person name="Maarse A.C."/>
            <person name="Schaefer M."/>
            <person name="Mueller-Auer S."/>
            <person name="Gabel C."/>
            <person name="Fuchs M."/>
            <person name="Fartmann B."/>
            <person name="Granderath K."/>
            <person name="Dauner D."/>
            <person name="Herzl A."/>
            <person name="Neumann S."/>
            <person name="Argiriou A."/>
            <person name="Vitale D."/>
            <person name="Liguori R."/>
            <person name="Piravandi E."/>
            <person name="Massenet O."/>
            <person name="Quigley F."/>
            <person name="Clabauld G."/>
            <person name="Muendlein A."/>
            <person name="Felber R."/>
            <person name="Schnabl S."/>
            <person name="Hiller R."/>
            <person name="Schmidt W."/>
            <person name="Lecharny A."/>
            <person name="Aubourg S."/>
            <person name="Chefdor F."/>
            <person name="Cooke R."/>
            <person name="Berger C."/>
            <person name="Monfort A."/>
            <person name="Casacuberta E."/>
            <person name="Gibbons T."/>
            <person name="Weber N."/>
            <person name="Vandenbol M."/>
            <person name="Bargues M."/>
            <person name="Terol J."/>
            <person name="Torres A."/>
            <person name="Perez-Perez A."/>
            <person name="Purnelle B."/>
            <person name="Bent E."/>
            <person name="Johnson S."/>
            <person name="Tacon D."/>
            <person name="Jesse T."/>
            <person name="Heijnen L."/>
            <person name="Schwarz S."/>
            <person name="Scholler P."/>
            <person name="Heber S."/>
            <person name="Francs P."/>
            <person name="Bielke C."/>
            <person name="Frishman D."/>
            <person name="Haase D."/>
            <person name="Lemcke K."/>
            <person name="Mewes H.-W."/>
            <person name="Stocker S."/>
            <person name="Zaccaria P."/>
            <person name="Bevan M."/>
            <person name="Wilson R.K."/>
            <person name="de la Bastide M."/>
            <person name="Habermann K."/>
            <person name="Parnell L."/>
            <person name="Dedhia N."/>
            <person name="Gnoj L."/>
            <person name="Schutz K."/>
            <person name="Huang E."/>
            <person name="Spiegel L."/>
            <person name="Sekhon M."/>
            <person name="Murray J."/>
            <person name="Sheet P."/>
            <person name="Cordes M."/>
            <person name="Abu-Threideh J."/>
            <person name="Stoneking T."/>
            <person name="Kalicki J."/>
            <person name="Graves T."/>
            <person name="Harmon G."/>
            <person name="Edwards J."/>
            <person name="Latreille P."/>
            <person name="Courtney L."/>
            <person name="Cloud J."/>
            <person name="Abbott A."/>
            <person name="Scott K."/>
            <person name="Johnson D."/>
            <person name="Minx P."/>
            <person name="Bentley D."/>
            <person name="Fulton B."/>
            <person name="Miller N."/>
            <person name="Greco T."/>
            <person name="Kemp K."/>
            <person name="Kramer J."/>
            <person name="Fulton L."/>
            <person name="Mardis E."/>
            <person name="Dante M."/>
            <person name="Pepin K."/>
            <person name="Hillier L.W."/>
            <person name="Nelson J."/>
            <person name="Spieth J."/>
            <person name="Ryan E."/>
            <person name="Andrews S."/>
            <person name="Geisel C."/>
            <person name="Layman D."/>
            <person name="Du H."/>
            <person name="Ali J."/>
            <person name="Berghoff A."/>
            <person name="Jones K."/>
            <person name="Drone K."/>
            <person name="Cotton M."/>
            <person name="Joshu C."/>
            <person name="Antonoiu B."/>
            <person name="Zidanic M."/>
            <person name="Strong C."/>
            <person name="Sun H."/>
            <person name="Lamar B."/>
            <person name="Yordan C."/>
            <person name="Ma P."/>
            <person name="Zhong J."/>
            <person name="Preston R."/>
            <person name="Vil D."/>
            <person name="Shekher M."/>
            <person name="Matero A."/>
            <person name="Shah R."/>
            <person name="Swaby I.K."/>
            <person name="O'Shaughnessy A."/>
            <person name="Rodriguez M."/>
            <person name="Hoffman J."/>
            <person name="Till S."/>
            <person name="Granat S."/>
            <person name="Shohdy N."/>
            <person name="Hasegawa A."/>
            <person name="Hameed A."/>
            <person name="Lodhi M."/>
            <person name="Johnson A."/>
            <person name="Chen E."/>
            <person name="Marra M.A."/>
            <person name="Martienssen R."/>
            <person name="McCombie W.R."/>
        </authorList>
    </citation>
    <scope>NUCLEOTIDE SEQUENCE [LARGE SCALE GENOMIC DNA]</scope>
    <source>
        <strain>cv. Columbia</strain>
    </source>
</reference>
<reference key="2">
    <citation type="journal article" date="2017" name="Plant J.">
        <title>Araport11: a complete reannotation of the Arabidopsis thaliana reference genome.</title>
        <authorList>
            <person name="Cheng C.Y."/>
            <person name="Krishnakumar V."/>
            <person name="Chan A.P."/>
            <person name="Thibaud-Nissen F."/>
            <person name="Schobel S."/>
            <person name="Town C.D."/>
        </authorList>
    </citation>
    <scope>GENOME REANNOTATION</scope>
    <source>
        <strain>cv. Columbia</strain>
    </source>
</reference>
<name>C71AS_ARATH</name>
<evidence type="ECO:0000250" key="1"/>
<evidence type="ECO:0000255" key="2"/>
<evidence type="ECO:0000305" key="3"/>
<dbReference type="EC" id="1.14.-.-"/>
<dbReference type="EMBL" id="AL022224">
    <property type="protein sequence ID" value="CAA18249.1"/>
    <property type="status" value="ALT_SEQ"/>
    <property type="molecule type" value="Genomic_DNA"/>
</dbReference>
<dbReference type="EMBL" id="AL161552">
    <property type="protein sequence ID" value="CAB79024.1"/>
    <property type="status" value="ALT_SEQ"/>
    <property type="molecule type" value="Genomic_DNA"/>
</dbReference>
<dbReference type="EMBL" id="CP002687">
    <property type="protein sequence ID" value="AEE84288.1"/>
    <property type="status" value="ALT_SEQ"/>
    <property type="molecule type" value="Genomic_DNA"/>
</dbReference>
<dbReference type="RefSeq" id="NP_001031675.2">
    <property type="nucleotide sequence ID" value="NM_001036598.2"/>
</dbReference>
<dbReference type="SMR" id="P58047"/>
<dbReference type="FunCoup" id="P58047">
    <property type="interactions" value="179"/>
</dbReference>
<dbReference type="STRING" id="3702.P58047"/>
<dbReference type="PeptideAtlas" id="P58047"/>
<dbReference type="GeneID" id="3770023"/>
<dbReference type="KEGG" id="ath:AT4G20235"/>
<dbReference type="Araport" id="AT4G20235"/>
<dbReference type="TAIR" id="AT4G20235">
    <property type="gene designation" value="CYP71A28"/>
</dbReference>
<dbReference type="eggNOG" id="KOG0156">
    <property type="taxonomic scope" value="Eukaryota"/>
</dbReference>
<dbReference type="InParanoid" id="P58047"/>
<dbReference type="PRO" id="PR:P58047"/>
<dbReference type="Proteomes" id="UP000006548">
    <property type="component" value="Chromosome 4"/>
</dbReference>
<dbReference type="ExpressionAtlas" id="P58047">
    <property type="expression patterns" value="baseline and differential"/>
</dbReference>
<dbReference type="GO" id="GO:0016020">
    <property type="term" value="C:membrane"/>
    <property type="evidence" value="ECO:0007669"/>
    <property type="project" value="UniProtKB-SubCell"/>
</dbReference>
<dbReference type="GO" id="GO:0020037">
    <property type="term" value="F:heme binding"/>
    <property type="evidence" value="ECO:0007669"/>
    <property type="project" value="InterPro"/>
</dbReference>
<dbReference type="GO" id="GO:0005506">
    <property type="term" value="F:iron ion binding"/>
    <property type="evidence" value="ECO:0007669"/>
    <property type="project" value="InterPro"/>
</dbReference>
<dbReference type="GO" id="GO:0004497">
    <property type="term" value="F:monooxygenase activity"/>
    <property type="evidence" value="ECO:0007669"/>
    <property type="project" value="UniProtKB-KW"/>
</dbReference>
<dbReference type="GO" id="GO:0016705">
    <property type="term" value="F:oxidoreductase activity, acting on paired donors, with incorporation or reduction of molecular oxygen"/>
    <property type="evidence" value="ECO:0007669"/>
    <property type="project" value="InterPro"/>
</dbReference>
<dbReference type="CDD" id="cd11072">
    <property type="entry name" value="CYP71-like"/>
    <property type="match status" value="1"/>
</dbReference>
<dbReference type="Gene3D" id="1.10.630.10">
    <property type="entry name" value="Cytochrome P450"/>
    <property type="match status" value="1"/>
</dbReference>
<dbReference type="InterPro" id="IPR001128">
    <property type="entry name" value="Cyt_P450"/>
</dbReference>
<dbReference type="InterPro" id="IPR017972">
    <property type="entry name" value="Cyt_P450_CS"/>
</dbReference>
<dbReference type="InterPro" id="IPR002401">
    <property type="entry name" value="Cyt_P450_E_grp-I"/>
</dbReference>
<dbReference type="InterPro" id="IPR036396">
    <property type="entry name" value="Cyt_P450_sf"/>
</dbReference>
<dbReference type="PANTHER" id="PTHR47955:SF15">
    <property type="entry name" value="CYTOCHROME P450 71A2-LIKE"/>
    <property type="match status" value="1"/>
</dbReference>
<dbReference type="PANTHER" id="PTHR47955">
    <property type="entry name" value="CYTOCHROME P450 FAMILY 71 PROTEIN"/>
    <property type="match status" value="1"/>
</dbReference>
<dbReference type="Pfam" id="PF00067">
    <property type="entry name" value="p450"/>
    <property type="match status" value="1"/>
</dbReference>
<dbReference type="PRINTS" id="PR00463">
    <property type="entry name" value="EP450I"/>
</dbReference>
<dbReference type="PRINTS" id="PR00385">
    <property type="entry name" value="P450"/>
</dbReference>
<dbReference type="SUPFAM" id="SSF48264">
    <property type="entry name" value="Cytochrome P450"/>
    <property type="match status" value="1"/>
</dbReference>
<dbReference type="PROSITE" id="PS00086">
    <property type="entry name" value="CYTOCHROME_P450"/>
    <property type="match status" value="1"/>
</dbReference>
<organism>
    <name type="scientific">Arabidopsis thaliana</name>
    <name type="common">Mouse-ear cress</name>
    <dbReference type="NCBI Taxonomy" id="3702"/>
    <lineage>
        <taxon>Eukaryota</taxon>
        <taxon>Viridiplantae</taxon>
        <taxon>Streptophyta</taxon>
        <taxon>Embryophyta</taxon>
        <taxon>Tracheophyta</taxon>
        <taxon>Spermatophyta</taxon>
        <taxon>Magnoliopsida</taxon>
        <taxon>eudicotyledons</taxon>
        <taxon>Gunneridae</taxon>
        <taxon>Pentapetalae</taxon>
        <taxon>rosids</taxon>
        <taxon>malvids</taxon>
        <taxon>Brassicales</taxon>
        <taxon>Brassicaceae</taxon>
        <taxon>Camelineae</taxon>
        <taxon>Arabidopsis</taxon>
    </lineage>
</organism>
<protein>
    <recommendedName>
        <fullName>Putative cytochrome P450 71A28</fullName>
        <ecNumber>1.14.-.-</ecNumber>
    </recommendedName>
</protein>
<sequence>MILISLCFTTFLAFLFLNPLLKRTTTTKPNQPPSPWRLPVIGYLHQLSLHPHRSFRSLSLRLWSAHAPSLRSCPYPRFSKYISSSDVAHDVMKTHDLKFANRPKTKAVDIIINGGRDVAFSSYGEYWRQMKSLCTVHLLGRQMVRSFEKVREEEITSVIWKLEKQSSSSLPVNLSDLLLNMSNDVICRIAVGRKYSREENTSDFENQLRKVMELLGAFPVGDYIPGLAWIDKVRGLDRKMEEVSKTFVEFLERVVQEHVDEGENKETFDFVDILLIQLEKTNEFELERSDIRLIILEFFLGGTTTTFTAIDWAMTLVVRHPESMKKLQEEIQTYSRNKLYVPEEEVENMKYLKAVIKEVFRLHPPGPLSIPRQLSEDVKLKDMIIPAGTMIIVFINAWAIHRDTEKWGPYAEEFKPERHLDLPLNFQGQDFNFIPFGSGRRLCPDIDFATMLIEVGLANFVYRFNWRVETRPLGDDDGLKQTGMEVCHKFPLIAFPSLASFTI</sequence>
<accession>P58047</accession>
<accession>F4JUT1</accession>
<keyword id="KW-0349">Heme</keyword>
<keyword id="KW-0408">Iron</keyword>
<keyword id="KW-0472">Membrane</keyword>
<keyword id="KW-0479">Metal-binding</keyword>
<keyword id="KW-0503">Monooxygenase</keyword>
<keyword id="KW-0560">Oxidoreductase</keyword>
<keyword id="KW-1185">Reference proteome</keyword>
<keyword id="KW-0812">Transmembrane</keyword>
<keyword id="KW-1133">Transmembrane helix</keyword>
<comment type="cofactor">
    <cofactor evidence="1">
        <name>heme</name>
        <dbReference type="ChEBI" id="CHEBI:30413"/>
    </cofactor>
</comment>
<comment type="subcellular location">
    <subcellularLocation>
        <location evidence="3">Membrane</location>
        <topology evidence="3">Single-pass membrane protein</topology>
    </subcellularLocation>
</comment>
<comment type="similarity">
    <text evidence="3">Belongs to the cytochrome P450 family.</text>
</comment>
<comment type="sequence caution" evidence="3">
    <conflict type="erroneous gene model prediction">
        <sequence resource="EMBL-CDS" id="AEE84288"/>
    </conflict>
</comment>
<comment type="sequence caution" evidence="3">
    <conflict type="erroneous gene model prediction">
        <sequence resource="EMBL-CDS" id="CAA18249"/>
    </conflict>
    <text>The predicted gene has been split into 2 genes: At4g20235 and At4g20240.</text>
</comment>
<comment type="sequence caution" evidence="3">
    <conflict type="erroneous gene model prediction">
        <sequence resource="EMBL-CDS" id="CAB79024"/>
    </conflict>
    <text>The predicted gene has been split into 2 genes: At4g20235 and At4g20240.</text>
</comment>
<proteinExistence type="inferred from homology"/>
<feature type="chain" id="PRO_0000052078" description="Putative cytochrome P450 71A28">
    <location>
        <begin position="1"/>
        <end position="503"/>
    </location>
</feature>
<feature type="transmembrane region" description="Helical" evidence="2">
    <location>
        <begin position="1"/>
        <end position="21"/>
    </location>
</feature>
<feature type="binding site" description="axial binding residue" evidence="1">
    <location>
        <position position="443"/>
    </location>
    <ligand>
        <name>heme</name>
        <dbReference type="ChEBI" id="CHEBI:30413"/>
    </ligand>
    <ligandPart>
        <name>Fe</name>
        <dbReference type="ChEBI" id="CHEBI:18248"/>
    </ligandPart>
</feature>